<name>ECHD1_XENTR</name>
<proteinExistence type="evidence at transcript level"/>
<gene>
    <name type="primary">echdc1</name>
    <name type="ORF">TGas092k23.1</name>
</gene>
<reference key="1">
    <citation type="submission" date="2005-07" db="EMBL/GenBank/DDBJ databases">
        <authorList>
            <consortium name="Sanger Xenopus tropicalis EST/cDNA project"/>
        </authorList>
    </citation>
    <scope>NUCLEOTIDE SEQUENCE [LARGE SCALE MRNA]</scope>
    <source>
        <tissue>Gastrula</tissue>
    </source>
</reference>
<reference key="2">
    <citation type="journal article" date="2010" name="Science">
        <title>The genome of the Western clawed frog Xenopus tropicalis.</title>
        <authorList>
            <person name="Hellsten U."/>
            <person name="Harland R.M."/>
            <person name="Gilchrist M.J."/>
            <person name="Hendrix D."/>
            <person name="Jurka J."/>
            <person name="Kapitonov V."/>
            <person name="Ovcharenko I."/>
            <person name="Putnam N.H."/>
            <person name="Shu S."/>
            <person name="Taher L."/>
            <person name="Blitz I.L."/>
            <person name="Blumberg B."/>
            <person name="Dichmann D.S."/>
            <person name="Dubchak I."/>
            <person name="Amaya E."/>
            <person name="Detter J.C."/>
            <person name="Fletcher R."/>
            <person name="Gerhard D.S."/>
            <person name="Goodstein D."/>
            <person name="Graves T."/>
            <person name="Grigoriev I.V."/>
            <person name="Grimwood J."/>
            <person name="Kawashima T."/>
            <person name="Lindquist E."/>
            <person name="Lucas S.M."/>
            <person name="Mead P.E."/>
            <person name="Mitros T."/>
            <person name="Ogino H."/>
            <person name="Ohta Y."/>
            <person name="Poliakov A.V."/>
            <person name="Pollet N."/>
            <person name="Robert J."/>
            <person name="Salamov A."/>
            <person name="Sater A.K."/>
            <person name="Schmutz J."/>
            <person name="Terry A."/>
            <person name="Vize P.D."/>
            <person name="Warren W.C."/>
            <person name="Wells D."/>
            <person name="Wills A."/>
            <person name="Wilson R.K."/>
            <person name="Zimmerman L.B."/>
            <person name="Zorn A.M."/>
            <person name="Grainger R."/>
            <person name="Grammer T."/>
            <person name="Khokha M.K."/>
            <person name="Richardson P.M."/>
            <person name="Rokhsar D.S."/>
        </authorList>
    </citation>
    <scope>NUCLEOTIDE SEQUENCE [LARGE SCALE GENOMIC DNA]</scope>
</reference>
<reference key="3">
    <citation type="submission" date="2008-11" db="EMBL/GenBank/DDBJ databases">
        <authorList>
            <consortium name="NIH - Xenopus Gene Collection (XGC) project"/>
        </authorList>
    </citation>
    <scope>NUCLEOTIDE SEQUENCE [LARGE SCALE MRNA]</scope>
    <source>
        <strain>N6</strain>
        <tissue>Gastrula</tissue>
        <tissue>Ovary</tissue>
    </source>
</reference>
<sequence length="299" mass="32907">MGIFVCRNSLRMLNVRWLYHRCLSLYNSNHGFNEAKIKEKLAQFTGGSVDLSKMDNGIAEICINNPSRMNAFTGTMMIELEERISDLENWKNGKGLIVYGAENTFCSGSDLNAVKAISNPQEGMMMCMLMQNTLTRLQRLPLISVALIQGKALGGGAELCTACDFRLMTEGSEIRFVHKQMGLVPGWGGAARLIHLIGSRHALKLLSGALRVHPENALELGLADNILLGTEDGFLSEAENWIMPYIKGPSDVSRAVKKVIISGREQKLEDALRTEKEIFGTVWGGLANLQALAKGTKHK</sequence>
<dbReference type="EC" id="4.1.1.94" evidence="1"/>
<dbReference type="EMBL" id="CR942395">
    <property type="protein sequence ID" value="CAJ83594.1"/>
    <property type="molecule type" value="mRNA"/>
</dbReference>
<dbReference type="EMBL" id="AAMC01103784">
    <property type="status" value="NOT_ANNOTATED_CDS"/>
    <property type="molecule type" value="Genomic_DNA"/>
</dbReference>
<dbReference type="EMBL" id="BC088780">
    <property type="protein sequence ID" value="AAH88780.1"/>
    <property type="molecule type" value="mRNA"/>
</dbReference>
<dbReference type="EMBL" id="BC118874">
    <property type="protein sequence ID" value="AAI18875.1"/>
    <property type="molecule type" value="mRNA"/>
</dbReference>
<dbReference type="EMBL" id="BC170562">
    <property type="protein sequence ID" value="AAI70562.1"/>
    <property type="molecule type" value="mRNA"/>
</dbReference>
<dbReference type="EMBL" id="BC170919">
    <property type="protein sequence ID" value="AAI70919.1"/>
    <property type="molecule type" value="mRNA"/>
</dbReference>
<dbReference type="RefSeq" id="NP_001037862.1">
    <property type="nucleotide sequence ID" value="NM_001044397.1"/>
</dbReference>
<dbReference type="RefSeq" id="XP_031757538.1">
    <property type="nucleotide sequence ID" value="XM_031901678.1"/>
</dbReference>
<dbReference type="SMR" id="Q28C91"/>
<dbReference type="FunCoup" id="Q28C91">
    <property type="interactions" value="821"/>
</dbReference>
<dbReference type="STRING" id="8364.ENSXETP00000010823"/>
<dbReference type="PaxDb" id="8364-ENSXETP00000061979"/>
<dbReference type="GeneID" id="496886"/>
<dbReference type="KEGG" id="xtr:496886"/>
<dbReference type="AGR" id="Xenbase:XB-GENE-958554"/>
<dbReference type="CTD" id="55862"/>
<dbReference type="Xenbase" id="XB-GENE-958554">
    <property type="gene designation" value="echdc1"/>
</dbReference>
<dbReference type="eggNOG" id="KOG1680">
    <property type="taxonomic scope" value="Eukaryota"/>
</dbReference>
<dbReference type="HOGENOM" id="CLU_009834_7_6_1"/>
<dbReference type="InParanoid" id="Q28C91"/>
<dbReference type="OrthoDB" id="448450at2759"/>
<dbReference type="TreeFam" id="TF315986"/>
<dbReference type="Proteomes" id="UP000008143">
    <property type="component" value="Chromosome 5"/>
</dbReference>
<dbReference type="ExpressionAtlas" id="Q28C91">
    <property type="expression patterns" value="baseline"/>
</dbReference>
<dbReference type="GO" id="GO:0005829">
    <property type="term" value="C:cytosol"/>
    <property type="evidence" value="ECO:0000250"/>
    <property type="project" value="UniProtKB"/>
</dbReference>
<dbReference type="GO" id="GO:0016831">
    <property type="term" value="F:carboxy-lyase activity"/>
    <property type="evidence" value="ECO:0000250"/>
    <property type="project" value="UniProtKB"/>
</dbReference>
<dbReference type="GO" id="GO:0004492">
    <property type="term" value="F:methyl/ethyl malonyl-CoA decarboxylase activity"/>
    <property type="evidence" value="ECO:0007669"/>
    <property type="project" value="UniProtKB-EC"/>
</dbReference>
<dbReference type="CDD" id="cd06558">
    <property type="entry name" value="crotonase-like"/>
    <property type="match status" value="1"/>
</dbReference>
<dbReference type="FunFam" id="3.90.226.10:FF:000040">
    <property type="entry name" value="Ethylmalonyl-CoA decarboxylase 1"/>
    <property type="match status" value="1"/>
</dbReference>
<dbReference type="Gene3D" id="3.90.226.10">
    <property type="entry name" value="2-enoyl-CoA Hydratase, Chain A, domain 1"/>
    <property type="match status" value="1"/>
</dbReference>
<dbReference type="InterPro" id="IPR029045">
    <property type="entry name" value="ClpP/crotonase-like_dom_sf"/>
</dbReference>
<dbReference type="InterPro" id="IPR018376">
    <property type="entry name" value="Enoyl-CoA_hyd/isom_CS"/>
</dbReference>
<dbReference type="InterPro" id="IPR001753">
    <property type="entry name" value="Enoyl-CoA_hydra/iso"/>
</dbReference>
<dbReference type="PANTHER" id="PTHR11941">
    <property type="entry name" value="ENOYL-COA HYDRATASE-RELATED"/>
    <property type="match status" value="1"/>
</dbReference>
<dbReference type="PANTHER" id="PTHR11941:SF27">
    <property type="entry name" value="ETHYLMALONYL-COA DECARBOXYLASE"/>
    <property type="match status" value="1"/>
</dbReference>
<dbReference type="Pfam" id="PF00378">
    <property type="entry name" value="ECH_1"/>
    <property type="match status" value="1"/>
</dbReference>
<dbReference type="SUPFAM" id="SSF52096">
    <property type="entry name" value="ClpP/crotonase"/>
    <property type="match status" value="1"/>
</dbReference>
<dbReference type="PROSITE" id="PS00166">
    <property type="entry name" value="ENOYL_COA_HYDRATASE"/>
    <property type="match status" value="1"/>
</dbReference>
<keyword id="KW-0963">Cytoplasm</keyword>
<keyword id="KW-0456">Lyase</keyword>
<keyword id="KW-1185">Reference proteome</keyword>
<comment type="function">
    <text evidence="1">Decarboxylates ethylmalonyl-CoA, a potentially toxic metabolite, to form butyryl-CoA, suggesting it might be involved in metabolite proofreading. Acts preferentially on (S)-ethylmalonyl-CoA but also has some activity on the (R)-isomer. Also has methylmalonyl-CoA decarboxylase activity at lower level.</text>
</comment>
<comment type="catalytic activity">
    <reaction evidence="1">
        <text>(2S)-ethylmalonyl-CoA + H(+) = butanoyl-CoA + CO2</text>
        <dbReference type="Rhea" id="RHEA:32131"/>
        <dbReference type="ChEBI" id="CHEBI:15378"/>
        <dbReference type="ChEBI" id="CHEBI:16526"/>
        <dbReference type="ChEBI" id="CHEBI:57371"/>
        <dbReference type="ChEBI" id="CHEBI:60909"/>
        <dbReference type="EC" id="4.1.1.94"/>
    </reaction>
    <physiologicalReaction direction="left-to-right" evidence="1">
        <dbReference type="Rhea" id="RHEA:32132"/>
    </physiologicalReaction>
</comment>
<comment type="catalytic activity">
    <reaction evidence="1">
        <text>(S)-methylmalonyl-CoA + H(+) = propanoyl-CoA + CO2</text>
        <dbReference type="Rhea" id="RHEA:61340"/>
        <dbReference type="ChEBI" id="CHEBI:15378"/>
        <dbReference type="ChEBI" id="CHEBI:16526"/>
        <dbReference type="ChEBI" id="CHEBI:57327"/>
        <dbReference type="ChEBI" id="CHEBI:57392"/>
        <dbReference type="EC" id="4.1.1.94"/>
    </reaction>
    <physiologicalReaction direction="left-to-right" evidence="1">
        <dbReference type="Rhea" id="RHEA:61341"/>
    </physiologicalReaction>
</comment>
<comment type="catalytic activity">
    <reaction evidence="1">
        <text>(2R)-ethylmalonyl-CoA + H(+) = butanoyl-CoA + CO2</text>
        <dbReference type="Rhea" id="RHEA:59540"/>
        <dbReference type="ChEBI" id="CHEBI:15378"/>
        <dbReference type="ChEBI" id="CHEBI:16526"/>
        <dbReference type="ChEBI" id="CHEBI:57371"/>
        <dbReference type="ChEBI" id="CHEBI:85316"/>
        <dbReference type="EC" id="4.1.1.94"/>
    </reaction>
    <physiologicalReaction direction="left-to-right" evidence="1">
        <dbReference type="Rhea" id="RHEA:59541"/>
    </physiologicalReaction>
</comment>
<comment type="subcellular location">
    <subcellularLocation>
        <location evidence="1">Cytoplasm</location>
        <location evidence="1">Cytosol</location>
    </subcellularLocation>
</comment>
<comment type="similarity">
    <text evidence="2">Belongs to the enoyl-CoA hydratase/isomerase family.</text>
</comment>
<protein>
    <recommendedName>
        <fullName>Ethylmalonyl-CoA decarboxylase</fullName>
        <ecNumber evidence="1">4.1.1.94</ecNumber>
    </recommendedName>
    <alternativeName>
        <fullName>Enoyl-CoA hydratase domain-containing protein 1</fullName>
    </alternativeName>
    <alternativeName>
        <fullName>Methylmalonyl-CoA decarboxylase</fullName>
        <shortName>MMCD</shortName>
    </alternativeName>
</protein>
<evidence type="ECO:0000250" key="1">
    <source>
        <dbReference type="UniProtKB" id="Q9D9V3"/>
    </source>
</evidence>
<evidence type="ECO:0000305" key="2"/>
<organism>
    <name type="scientific">Xenopus tropicalis</name>
    <name type="common">Western clawed frog</name>
    <name type="synonym">Silurana tropicalis</name>
    <dbReference type="NCBI Taxonomy" id="8364"/>
    <lineage>
        <taxon>Eukaryota</taxon>
        <taxon>Metazoa</taxon>
        <taxon>Chordata</taxon>
        <taxon>Craniata</taxon>
        <taxon>Vertebrata</taxon>
        <taxon>Euteleostomi</taxon>
        <taxon>Amphibia</taxon>
        <taxon>Batrachia</taxon>
        <taxon>Anura</taxon>
        <taxon>Pipoidea</taxon>
        <taxon>Pipidae</taxon>
        <taxon>Xenopodinae</taxon>
        <taxon>Xenopus</taxon>
        <taxon>Silurana</taxon>
    </lineage>
</organism>
<feature type="chain" id="PRO_0000416274" description="Ethylmalonyl-CoA decarboxylase">
    <location>
        <begin position="1"/>
        <end position="299"/>
    </location>
</feature>
<accession>Q28C91</accession>
<accession>F6UNG1</accession>
<accession>Q0VFD0</accession>
<accession>Q5M791</accession>